<proteinExistence type="inferred from homology"/>
<sequence>MKTDIEIAQSIELKPIVDVVEKLGISYDDLELYGKYKAKLSFDKIRAVESNPVGKLILVTAINPTPAGEGKSTLTIGLADALNKIGKKTMIAIREPSLGPVMGIKGGAAGGGYAQVLPMEDINLHFTGDMHAITTANNALSALIDNHLHQGNELGIDQRRILWKRVVDLNDRALRHVTVGLGGPLNGIPREDGFDITVASEIMAILCLATDIEDLKRRLANIVIGYRYDRTPVSVGDLQVEGALALILKDAIKPNLVQTIYGTPAFVHGGPFANIAHGCNSVLATTTALHLADYTVTEAGFGADLGAEKFLDIKTPNLPTSPDAVVIVATLRALKMNGGVAKDALTEENVEAVRAGFANLKRHVENIRKFGIPAVVAINEFVSDTEAEIAALKELCALIDVPVELASVWADGVEGGVELAETVVKTIAENPANYKRLYDNDLSVQEKIEKIVTEIYRGSKVNFEKKAQTQIAQVVQNGWDKLPICMAKTQYSFSDNPNALGAPENFEITIRELVPKLGAGFIVALTGDVMTMPGLPKRPAALNMDVESDGTVLGLF</sequence>
<comment type="catalytic activity">
    <reaction evidence="1">
        <text>(6S)-5,6,7,8-tetrahydrofolate + formate + ATP = (6R)-10-formyltetrahydrofolate + ADP + phosphate</text>
        <dbReference type="Rhea" id="RHEA:20221"/>
        <dbReference type="ChEBI" id="CHEBI:15740"/>
        <dbReference type="ChEBI" id="CHEBI:30616"/>
        <dbReference type="ChEBI" id="CHEBI:43474"/>
        <dbReference type="ChEBI" id="CHEBI:57453"/>
        <dbReference type="ChEBI" id="CHEBI:195366"/>
        <dbReference type="ChEBI" id="CHEBI:456216"/>
        <dbReference type="EC" id="6.3.4.3"/>
    </reaction>
</comment>
<comment type="pathway">
    <text evidence="1">One-carbon metabolism; tetrahydrofolate interconversion.</text>
</comment>
<comment type="similarity">
    <text evidence="1">Belongs to the formate--tetrahydrofolate ligase family.</text>
</comment>
<evidence type="ECO:0000255" key="1">
    <source>
        <dbReference type="HAMAP-Rule" id="MF_01543"/>
    </source>
</evidence>
<gene>
    <name evidence="1" type="primary">fhs</name>
    <name type="ordered locus">SPG_1120</name>
</gene>
<reference key="1">
    <citation type="journal article" date="2001" name="Microb. Drug Resist.">
        <title>Annotated draft genomic sequence from a Streptococcus pneumoniae type 19F clinical isolate.</title>
        <authorList>
            <person name="Dopazo J."/>
            <person name="Mendoza A."/>
            <person name="Herrero J."/>
            <person name="Caldara F."/>
            <person name="Humbert Y."/>
            <person name="Friedli L."/>
            <person name="Guerrier M."/>
            <person name="Grand-Schenk E."/>
            <person name="Gandin C."/>
            <person name="de Francesco M."/>
            <person name="Polissi A."/>
            <person name="Buell G."/>
            <person name="Feger G."/>
            <person name="Garcia E."/>
            <person name="Peitsch M."/>
            <person name="Garcia-Bustos J.F."/>
        </authorList>
    </citation>
    <scope>NUCLEOTIDE SEQUENCE [LARGE SCALE GENOMIC DNA]</scope>
    <source>
        <strain>G54</strain>
    </source>
</reference>
<reference key="2">
    <citation type="submission" date="2008-03" db="EMBL/GenBank/DDBJ databases">
        <title>Pneumococcal beta glucoside metabolism investigated by whole genome comparison.</title>
        <authorList>
            <person name="Mulas L."/>
            <person name="Trappetti C."/>
            <person name="Hakenbeck R."/>
            <person name="Iannelli F."/>
            <person name="Pozzi G."/>
            <person name="Davidsen T.M."/>
            <person name="Tettelin H."/>
            <person name="Oggioni M."/>
        </authorList>
    </citation>
    <scope>NUCLEOTIDE SEQUENCE [LARGE SCALE GENOMIC DNA]</scope>
    <source>
        <strain>G54</strain>
    </source>
</reference>
<name>FTHS_STRP4</name>
<dbReference type="EC" id="6.3.4.3" evidence="1"/>
<dbReference type="EMBL" id="CP001015">
    <property type="protein sequence ID" value="ACF55434.1"/>
    <property type="molecule type" value="Genomic_DNA"/>
</dbReference>
<dbReference type="SMR" id="B5E4W4"/>
<dbReference type="KEGG" id="spx:SPG_1120"/>
<dbReference type="HOGENOM" id="CLU_003601_3_3_9"/>
<dbReference type="UniPathway" id="UPA00193"/>
<dbReference type="GO" id="GO:0005524">
    <property type="term" value="F:ATP binding"/>
    <property type="evidence" value="ECO:0007669"/>
    <property type="project" value="UniProtKB-UniRule"/>
</dbReference>
<dbReference type="GO" id="GO:0004329">
    <property type="term" value="F:formate-tetrahydrofolate ligase activity"/>
    <property type="evidence" value="ECO:0007669"/>
    <property type="project" value="UniProtKB-UniRule"/>
</dbReference>
<dbReference type="GO" id="GO:0035999">
    <property type="term" value="P:tetrahydrofolate interconversion"/>
    <property type="evidence" value="ECO:0007669"/>
    <property type="project" value="UniProtKB-UniRule"/>
</dbReference>
<dbReference type="CDD" id="cd00477">
    <property type="entry name" value="FTHFS"/>
    <property type="match status" value="1"/>
</dbReference>
<dbReference type="FunFam" id="3.30.1510.10:FF:000001">
    <property type="entry name" value="Formate--tetrahydrofolate ligase"/>
    <property type="match status" value="1"/>
</dbReference>
<dbReference type="FunFam" id="3.10.410.10:FF:000001">
    <property type="entry name" value="Putative formate--tetrahydrofolate ligase"/>
    <property type="match status" value="1"/>
</dbReference>
<dbReference type="Gene3D" id="3.30.1510.10">
    <property type="entry name" value="Domain 2, N(10)-formyltetrahydrofolate synthetase"/>
    <property type="match status" value="1"/>
</dbReference>
<dbReference type="Gene3D" id="3.10.410.10">
    <property type="entry name" value="Formyltetrahydrofolate synthetase, domain 3"/>
    <property type="match status" value="1"/>
</dbReference>
<dbReference type="Gene3D" id="3.40.50.300">
    <property type="entry name" value="P-loop containing nucleotide triphosphate hydrolases"/>
    <property type="match status" value="1"/>
</dbReference>
<dbReference type="HAMAP" id="MF_01543">
    <property type="entry name" value="FTHFS"/>
    <property type="match status" value="1"/>
</dbReference>
<dbReference type="InterPro" id="IPR000559">
    <property type="entry name" value="Formate_THF_ligase"/>
</dbReference>
<dbReference type="InterPro" id="IPR020628">
    <property type="entry name" value="Formate_THF_ligase_CS"/>
</dbReference>
<dbReference type="InterPro" id="IPR027417">
    <property type="entry name" value="P-loop_NTPase"/>
</dbReference>
<dbReference type="NCBIfam" id="NF010030">
    <property type="entry name" value="PRK13505.1"/>
    <property type="match status" value="1"/>
</dbReference>
<dbReference type="Pfam" id="PF01268">
    <property type="entry name" value="FTHFS"/>
    <property type="match status" value="1"/>
</dbReference>
<dbReference type="SUPFAM" id="SSF52540">
    <property type="entry name" value="P-loop containing nucleoside triphosphate hydrolases"/>
    <property type="match status" value="1"/>
</dbReference>
<dbReference type="PROSITE" id="PS00721">
    <property type="entry name" value="FTHFS_1"/>
    <property type="match status" value="1"/>
</dbReference>
<dbReference type="PROSITE" id="PS00722">
    <property type="entry name" value="FTHFS_2"/>
    <property type="match status" value="1"/>
</dbReference>
<keyword id="KW-0067">ATP-binding</keyword>
<keyword id="KW-0436">Ligase</keyword>
<keyword id="KW-0547">Nucleotide-binding</keyword>
<keyword id="KW-0554">One-carbon metabolism</keyword>
<protein>
    <recommendedName>
        <fullName evidence="1">Formate--tetrahydrofolate ligase</fullName>
        <ecNumber evidence="1">6.3.4.3</ecNumber>
    </recommendedName>
    <alternativeName>
        <fullName evidence="1">Formyltetrahydrofolate synthetase</fullName>
        <shortName evidence="1">FHS</shortName>
        <shortName evidence="1">FTHFS</shortName>
    </alternativeName>
</protein>
<organism>
    <name type="scientific">Streptococcus pneumoniae serotype 19F (strain G54)</name>
    <dbReference type="NCBI Taxonomy" id="512566"/>
    <lineage>
        <taxon>Bacteria</taxon>
        <taxon>Bacillati</taxon>
        <taxon>Bacillota</taxon>
        <taxon>Bacilli</taxon>
        <taxon>Lactobacillales</taxon>
        <taxon>Streptococcaceae</taxon>
        <taxon>Streptococcus</taxon>
    </lineage>
</organism>
<feature type="chain" id="PRO_1000196827" description="Formate--tetrahydrofolate ligase">
    <location>
        <begin position="1"/>
        <end position="556"/>
    </location>
</feature>
<feature type="binding site" evidence="1">
    <location>
        <begin position="65"/>
        <end position="72"/>
    </location>
    <ligand>
        <name>ATP</name>
        <dbReference type="ChEBI" id="CHEBI:30616"/>
    </ligand>
</feature>
<accession>B5E4W4</accession>